<gene>
    <name evidence="1" type="primary">folD</name>
    <name type="ordered locus">GOX0792</name>
</gene>
<dbReference type="EC" id="1.5.1.5" evidence="1"/>
<dbReference type="EC" id="3.5.4.9" evidence="1"/>
<dbReference type="EMBL" id="CP000009">
    <property type="protein sequence ID" value="AAW60566.1"/>
    <property type="molecule type" value="Genomic_DNA"/>
</dbReference>
<dbReference type="RefSeq" id="WP_011252362.1">
    <property type="nucleotide sequence ID" value="NC_006677.1"/>
</dbReference>
<dbReference type="SMR" id="Q5FST0"/>
<dbReference type="STRING" id="290633.GOX0792"/>
<dbReference type="KEGG" id="gox:GOX0792"/>
<dbReference type="eggNOG" id="COG0190">
    <property type="taxonomic scope" value="Bacteria"/>
</dbReference>
<dbReference type="HOGENOM" id="CLU_034045_2_1_5"/>
<dbReference type="UniPathway" id="UPA00193"/>
<dbReference type="Proteomes" id="UP000006375">
    <property type="component" value="Chromosome"/>
</dbReference>
<dbReference type="GO" id="GO:0005829">
    <property type="term" value="C:cytosol"/>
    <property type="evidence" value="ECO:0007669"/>
    <property type="project" value="TreeGrafter"/>
</dbReference>
<dbReference type="GO" id="GO:0004477">
    <property type="term" value="F:methenyltetrahydrofolate cyclohydrolase activity"/>
    <property type="evidence" value="ECO:0007669"/>
    <property type="project" value="UniProtKB-UniRule"/>
</dbReference>
<dbReference type="GO" id="GO:0004488">
    <property type="term" value="F:methylenetetrahydrofolate dehydrogenase (NADP+) activity"/>
    <property type="evidence" value="ECO:0007669"/>
    <property type="project" value="UniProtKB-UniRule"/>
</dbReference>
<dbReference type="GO" id="GO:0000105">
    <property type="term" value="P:L-histidine biosynthetic process"/>
    <property type="evidence" value="ECO:0007669"/>
    <property type="project" value="UniProtKB-KW"/>
</dbReference>
<dbReference type="GO" id="GO:0009086">
    <property type="term" value="P:methionine biosynthetic process"/>
    <property type="evidence" value="ECO:0007669"/>
    <property type="project" value="UniProtKB-KW"/>
</dbReference>
<dbReference type="GO" id="GO:0006164">
    <property type="term" value="P:purine nucleotide biosynthetic process"/>
    <property type="evidence" value="ECO:0007669"/>
    <property type="project" value="UniProtKB-KW"/>
</dbReference>
<dbReference type="GO" id="GO:0035999">
    <property type="term" value="P:tetrahydrofolate interconversion"/>
    <property type="evidence" value="ECO:0007669"/>
    <property type="project" value="UniProtKB-UniRule"/>
</dbReference>
<dbReference type="CDD" id="cd01080">
    <property type="entry name" value="NAD_bind_m-THF_DH_Cyclohyd"/>
    <property type="match status" value="1"/>
</dbReference>
<dbReference type="FunFam" id="3.40.50.720:FF:000006">
    <property type="entry name" value="Bifunctional protein FolD"/>
    <property type="match status" value="1"/>
</dbReference>
<dbReference type="FunFam" id="3.40.50.10860:FF:000005">
    <property type="entry name" value="C-1-tetrahydrofolate synthase, cytoplasmic, putative"/>
    <property type="match status" value="1"/>
</dbReference>
<dbReference type="Gene3D" id="3.40.50.10860">
    <property type="entry name" value="Leucine Dehydrogenase, chain A, domain 1"/>
    <property type="match status" value="1"/>
</dbReference>
<dbReference type="Gene3D" id="3.40.50.720">
    <property type="entry name" value="NAD(P)-binding Rossmann-like Domain"/>
    <property type="match status" value="1"/>
</dbReference>
<dbReference type="HAMAP" id="MF_01576">
    <property type="entry name" value="THF_DHG_CYH"/>
    <property type="match status" value="1"/>
</dbReference>
<dbReference type="InterPro" id="IPR046346">
    <property type="entry name" value="Aminoacid_DH-like_N_sf"/>
</dbReference>
<dbReference type="InterPro" id="IPR036291">
    <property type="entry name" value="NAD(P)-bd_dom_sf"/>
</dbReference>
<dbReference type="InterPro" id="IPR000672">
    <property type="entry name" value="THF_DH/CycHdrlase"/>
</dbReference>
<dbReference type="InterPro" id="IPR020630">
    <property type="entry name" value="THF_DH/CycHdrlase_cat_dom"/>
</dbReference>
<dbReference type="InterPro" id="IPR020867">
    <property type="entry name" value="THF_DH/CycHdrlase_CS"/>
</dbReference>
<dbReference type="InterPro" id="IPR020631">
    <property type="entry name" value="THF_DH/CycHdrlase_NAD-bd_dom"/>
</dbReference>
<dbReference type="NCBIfam" id="NF008058">
    <property type="entry name" value="PRK10792.1"/>
    <property type="match status" value="1"/>
</dbReference>
<dbReference type="NCBIfam" id="NF010785">
    <property type="entry name" value="PRK14188.1"/>
    <property type="match status" value="1"/>
</dbReference>
<dbReference type="PANTHER" id="PTHR48099:SF5">
    <property type="entry name" value="C-1-TETRAHYDROFOLATE SYNTHASE, CYTOPLASMIC"/>
    <property type="match status" value="1"/>
</dbReference>
<dbReference type="PANTHER" id="PTHR48099">
    <property type="entry name" value="C-1-TETRAHYDROFOLATE SYNTHASE, CYTOPLASMIC-RELATED"/>
    <property type="match status" value="1"/>
</dbReference>
<dbReference type="Pfam" id="PF00763">
    <property type="entry name" value="THF_DHG_CYH"/>
    <property type="match status" value="1"/>
</dbReference>
<dbReference type="Pfam" id="PF02882">
    <property type="entry name" value="THF_DHG_CYH_C"/>
    <property type="match status" value="1"/>
</dbReference>
<dbReference type="PRINTS" id="PR00085">
    <property type="entry name" value="THFDHDRGNASE"/>
</dbReference>
<dbReference type="SUPFAM" id="SSF53223">
    <property type="entry name" value="Aminoacid dehydrogenase-like, N-terminal domain"/>
    <property type="match status" value="1"/>
</dbReference>
<dbReference type="SUPFAM" id="SSF51735">
    <property type="entry name" value="NAD(P)-binding Rossmann-fold domains"/>
    <property type="match status" value="1"/>
</dbReference>
<dbReference type="PROSITE" id="PS00766">
    <property type="entry name" value="THF_DHG_CYH_1"/>
    <property type="match status" value="1"/>
</dbReference>
<dbReference type="PROSITE" id="PS00767">
    <property type="entry name" value="THF_DHG_CYH_2"/>
    <property type="match status" value="1"/>
</dbReference>
<sequence>MSMLSPEKPSEPAKIIDGKGIARALTDQVGREVAKFVEQGNTIPGLAVVLVGNDPASEVYVKNKAIQTHRVGMRSFMHMLPQSTSQDELLDLIAQLNANPKIHGILVQLPLPAQIDPVAVTNAIAPHKDVDGLGEVNAGRLSLGIDGIVPCTPLGCLMLLQSVHKDMTGMHAVVIGASNLVGKPMAQLLLKENCTVTVAHIHTRNTKELAREADILVVATGKSELVRGDWIKPGATVIDVGITRVPAENGKTRLVGDVAFDEAFPIAGHITPVPGGVGPMTIACLLHNTLQAARATQAVADASS</sequence>
<protein>
    <recommendedName>
        <fullName evidence="1">Bifunctional protein FolD</fullName>
    </recommendedName>
    <domain>
        <recommendedName>
            <fullName evidence="1">Methylenetetrahydrofolate dehydrogenase</fullName>
            <ecNumber evidence="1">1.5.1.5</ecNumber>
        </recommendedName>
    </domain>
    <domain>
        <recommendedName>
            <fullName evidence="1">Methenyltetrahydrofolate cyclohydrolase</fullName>
            <ecNumber evidence="1">3.5.4.9</ecNumber>
        </recommendedName>
    </domain>
</protein>
<reference key="1">
    <citation type="journal article" date="2005" name="Nat. Biotechnol.">
        <title>Complete genome sequence of the acetic acid bacterium Gluconobacter oxydans.</title>
        <authorList>
            <person name="Prust C."/>
            <person name="Hoffmeister M."/>
            <person name="Liesegang H."/>
            <person name="Wiezer A."/>
            <person name="Fricke W.F."/>
            <person name="Ehrenreich A."/>
            <person name="Gottschalk G."/>
            <person name="Deppenmeier U."/>
        </authorList>
    </citation>
    <scope>NUCLEOTIDE SEQUENCE [LARGE SCALE GENOMIC DNA]</scope>
    <source>
        <strain>621H</strain>
    </source>
</reference>
<evidence type="ECO:0000255" key="1">
    <source>
        <dbReference type="HAMAP-Rule" id="MF_01576"/>
    </source>
</evidence>
<proteinExistence type="inferred from homology"/>
<comment type="function">
    <text evidence="1">Catalyzes the oxidation of 5,10-methylenetetrahydrofolate to 5,10-methenyltetrahydrofolate and then the hydrolysis of 5,10-methenyltetrahydrofolate to 10-formyltetrahydrofolate.</text>
</comment>
<comment type="catalytic activity">
    <reaction evidence="1">
        <text>(6R)-5,10-methylene-5,6,7,8-tetrahydrofolate + NADP(+) = (6R)-5,10-methenyltetrahydrofolate + NADPH</text>
        <dbReference type="Rhea" id="RHEA:22812"/>
        <dbReference type="ChEBI" id="CHEBI:15636"/>
        <dbReference type="ChEBI" id="CHEBI:57455"/>
        <dbReference type="ChEBI" id="CHEBI:57783"/>
        <dbReference type="ChEBI" id="CHEBI:58349"/>
        <dbReference type="EC" id="1.5.1.5"/>
    </reaction>
</comment>
<comment type="catalytic activity">
    <reaction evidence="1">
        <text>(6R)-5,10-methenyltetrahydrofolate + H2O = (6R)-10-formyltetrahydrofolate + H(+)</text>
        <dbReference type="Rhea" id="RHEA:23700"/>
        <dbReference type="ChEBI" id="CHEBI:15377"/>
        <dbReference type="ChEBI" id="CHEBI:15378"/>
        <dbReference type="ChEBI" id="CHEBI:57455"/>
        <dbReference type="ChEBI" id="CHEBI:195366"/>
        <dbReference type="EC" id="3.5.4.9"/>
    </reaction>
</comment>
<comment type="pathway">
    <text evidence="1">One-carbon metabolism; tetrahydrofolate interconversion.</text>
</comment>
<comment type="subunit">
    <text evidence="1">Homodimer.</text>
</comment>
<comment type="similarity">
    <text evidence="1">Belongs to the tetrahydrofolate dehydrogenase/cyclohydrolase family.</text>
</comment>
<accession>Q5FST0</accession>
<keyword id="KW-0028">Amino-acid biosynthesis</keyword>
<keyword id="KW-0368">Histidine biosynthesis</keyword>
<keyword id="KW-0378">Hydrolase</keyword>
<keyword id="KW-0486">Methionine biosynthesis</keyword>
<keyword id="KW-0511">Multifunctional enzyme</keyword>
<keyword id="KW-0521">NADP</keyword>
<keyword id="KW-0554">One-carbon metabolism</keyword>
<keyword id="KW-0560">Oxidoreductase</keyword>
<keyword id="KW-0658">Purine biosynthesis</keyword>
<keyword id="KW-1185">Reference proteome</keyword>
<name>FOLD_GLUOX</name>
<feature type="chain" id="PRO_0000268363" description="Bifunctional protein FolD">
    <location>
        <begin position="1"/>
        <end position="304"/>
    </location>
</feature>
<feature type="binding site" evidence="1">
    <location>
        <begin position="176"/>
        <end position="178"/>
    </location>
    <ligand>
        <name>NADP(+)</name>
        <dbReference type="ChEBI" id="CHEBI:58349"/>
    </ligand>
</feature>
<feature type="binding site" evidence="1">
    <location>
        <position position="201"/>
    </location>
    <ligand>
        <name>NADP(+)</name>
        <dbReference type="ChEBI" id="CHEBI:58349"/>
    </ligand>
</feature>
<feature type="binding site" evidence="1">
    <location>
        <position position="242"/>
    </location>
    <ligand>
        <name>NADP(+)</name>
        <dbReference type="ChEBI" id="CHEBI:58349"/>
    </ligand>
</feature>
<organism>
    <name type="scientific">Gluconobacter oxydans (strain 621H)</name>
    <name type="common">Gluconobacter suboxydans</name>
    <dbReference type="NCBI Taxonomy" id="290633"/>
    <lineage>
        <taxon>Bacteria</taxon>
        <taxon>Pseudomonadati</taxon>
        <taxon>Pseudomonadota</taxon>
        <taxon>Alphaproteobacteria</taxon>
        <taxon>Acetobacterales</taxon>
        <taxon>Acetobacteraceae</taxon>
        <taxon>Gluconobacter</taxon>
    </lineage>
</organism>